<gene>
    <name type="primary">ORP1D</name>
    <name type="ordered locus">At1g13170</name>
    <name type="ORF">F3F19.19</name>
</gene>
<dbReference type="EMBL" id="AC007357">
    <property type="protein sequence ID" value="AAD31070.1"/>
    <property type="molecule type" value="Genomic_DNA"/>
</dbReference>
<dbReference type="EMBL" id="CP002684">
    <property type="protein sequence ID" value="AEE28978.1"/>
    <property type="molecule type" value="Genomic_DNA"/>
</dbReference>
<dbReference type="EMBL" id="AF462814">
    <property type="protein sequence ID" value="AAL58905.1"/>
    <property type="molecule type" value="mRNA"/>
</dbReference>
<dbReference type="PIR" id="A86266">
    <property type="entry name" value="A86266"/>
</dbReference>
<dbReference type="RefSeq" id="NP_172776.1">
    <molecule id="Q9SAF0-1"/>
    <property type="nucleotide sequence ID" value="NM_101187.3"/>
</dbReference>
<dbReference type="SMR" id="Q9SAF0"/>
<dbReference type="FunCoup" id="Q9SAF0">
    <property type="interactions" value="3281"/>
</dbReference>
<dbReference type="STRING" id="3702.Q9SAF0"/>
<dbReference type="iPTMnet" id="Q9SAF0"/>
<dbReference type="PaxDb" id="3702-AT1G13170.2"/>
<dbReference type="ProteomicsDB" id="248824">
    <molecule id="Q9SAF0-1"/>
</dbReference>
<dbReference type="EnsemblPlants" id="AT1G13170.1">
    <molecule id="Q9SAF0-1"/>
    <property type="protein sequence ID" value="AT1G13170.1"/>
    <property type="gene ID" value="AT1G13170"/>
</dbReference>
<dbReference type="GeneID" id="837875"/>
<dbReference type="Gramene" id="AT1G13170.1">
    <molecule id="Q9SAF0-1"/>
    <property type="protein sequence ID" value="AT1G13170.1"/>
    <property type="gene ID" value="AT1G13170"/>
</dbReference>
<dbReference type="KEGG" id="ath:AT1G13170"/>
<dbReference type="Araport" id="AT1G13170"/>
<dbReference type="TAIR" id="AT1G13170">
    <property type="gene designation" value="ORP1D"/>
</dbReference>
<dbReference type="eggNOG" id="KOG1737">
    <property type="taxonomic scope" value="Eukaryota"/>
</dbReference>
<dbReference type="InParanoid" id="Q9SAF0"/>
<dbReference type="PhylomeDB" id="Q9SAF0"/>
<dbReference type="PRO" id="PR:Q9SAF0"/>
<dbReference type="Proteomes" id="UP000006548">
    <property type="component" value="Chromosome 1"/>
</dbReference>
<dbReference type="ExpressionAtlas" id="Q9SAF0">
    <property type="expression patterns" value="baseline and differential"/>
</dbReference>
<dbReference type="GO" id="GO:0008289">
    <property type="term" value="F:lipid binding"/>
    <property type="evidence" value="ECO:0007669"/>
    <property type="project" value="UniProtKB-KW"/>
</dbReference>
<dbReference type="GO" id="GO:0006869">
    <property type="term" value="P:lipid transport"/>
    <property type="evidence" value="ECO:0007669"/>
    <property type="project" value="UniProtKB-KW"/>
</dbReference>
<dbReference type="FunFam" id="2.40.160.120:FF:000006">
    <property type="entry name" value="oxysterol-binding protein-related protein 1D isoform X1"/>
    <property type="match status" value="1"/>
</dbReference>
<dbReference type="FunFam" id="3.30.70.3490:FF:000013">
    <property type="entry name" value="Oxysterol-binding protein-related protein 2A"/>
    <property type="match status" value="1"/>
</dbReference>
<dbReference type="Gene3D" id="2.40.160.120">
    <property type="match status" value="1"/>
</dbReference>
<dbReference type="Gene3D" id="3.30.70.3490">
    <property type="match status" value="1"/>
</dbReference>
<dbReference type="Gene3D" id="2.30.29.30">
    <property type="entry name" value="Pleckstrin-homology domain (PH domain)/Phosphotyrosine-binding domain (PTB)"/>
    <property type="match status" value="1"/>
</dbReference>
<dbReference type="InterPro" id="IPR037239">
    <property type="entry name" value="OSBP_sf"/>
</dbReference>
<dbReference type="InterPro" id="IPR000648">
    <property type="entry name" value="Oxysterol-bd"/>
</dbReference>
<dbReference type="InterPro" id="IPR011993">
    <property type="entry name" value="PH-like_dom_sf"/>
</dbReference>
<dbReference type="InterPro" id="IPR001849">
    <property type="entry name" value="PH_domain"/>
</dbReference>
<dbReference type="PANTHER" id="PTHR10972">
    <property type="entry name" value="OXYSTEROL-BINDING PROTEIN-RELATED"/>
    <property type="match status" value="1"/>
</dbReference>
<dbReference type="PANTHER" id="PTHR10972:SF67">
    <property type="entry name" value="OXYSTEROL-BINDING PROTEIN-RELATED PROTEIN 1D"/>
    <property type="match status" value="1"/>
</dbReference>
<dbReference type="Pfam" id="PF01237">
    <property type="entry name" value="Oxysterol_BP"/>
    <property type="match status" value="1"/>
</dbReference>
<dbReference type="Pfam" id="PF15413">
    <property type="entry name" value="PH_11"/>
    <property type="match status" value="1"/>
</dbReference>
<dbReference type="SMART" id="SM00233">
    <property type="entry name" value="PH"/>
    <property type="match status" value="1"/>
</dbReference>
<dbReference type="SUPFAM" id="SSF144000">
    <property type="entry name" value="Oxysterol-binding protein-like"/>
    <property type="match status" value="1"/>
</dbReference>
<dbReference type="SUPFAM" id="SSF50729">
    <property type="entry name" value="PH domain-like"/>
    <property type="match status" value="1"/>
</dbReference>
<dbReference type="PROSITE" id="PS50003">
    <property type="entry name" value="PH_DOMAIN"/>
    <property type="match status" value="1"/>
</dbReference>
<feature type="chain" id="PRO_0000402159" description="Oxysterol-binding protein-related protein 1D">
    <location>
        <begin position="1"/>
        <end position="816"/>
    </location>
</feature>
<feature type="domain" description="PH" evidence="3">
    <location>
        <begin position="92"/>
        <end position="229"/>
    </location>
</feature>
<feature type="region of interest" description="Disordered" evidence="4">
    <location>
        <begin position="340"/>
        <end position="362"/>
    </location>
</feature>
<feature type="coiled-coil region" evidence="2">
    <location>
        <begin position="290"/>
        <end position="321"/>
    </location>
</feature>
<feature type="coiled-coil region" evidence="2">
    <location>
        <begin position="735"/>
        <end position="764"/>
    </location>
</feature>
<feature type="compositionally biased region" description="Acidic residues" evidence="4">
    <location>
        <begin position="344"/>
        <end position="362"/>
    </location>
</feature>
<evidence type="ECO:0000250" key="1"/>
<evidence type="ECO:0000255" key="2"/>
<evidence type="ECO:0000255" key="3">
    <source>
        <dbReference type="PROSITE-ProRule" id="PRU00145"/>
    </source>
</evidence>
<evidence type="ECO:0000256" key="4">
    <source>
        <dbReference type="SAM" id="MobiDB-lite"/>
    </source>
</evidence>
<evidence type="ECO:0000269" key="5">
    <source>
    </source>
</evidence>
<evidence type="ECO:0000305" key="6"/>
<comment type="function">
    <text evidence="1">May be involved in the transport of sterols.</text>
</comment>
<comment type="alternative products">
    <event type="alternative splicing"/>
    <isoform>
        <id>Q9SAF0-1</id>
        <name>1</name>
        <sequence type="displayed"/>
    </isoform>
    <text>A number of isoforms are produced. According to EST sequences.</text>
</comment>
<comment type="tissue specificity">
    <text evidence="5">Expressed in roots, leaves, stems and flowers.</text>
</comment>
<comment type="similarity">
    <text evidence="6">Belongs to the OSBP family.</text>
</comment>
<organism>
    <name type="scientific">Arabidopsis thaliana</name>
    <name type="common">Mouse-ear cress</name>
    <dbReference type="NCBI Taxonomy" id="3702"/>
    <lineage>
        <taxon>Eukaryota</taxon>
        <taxon>Viridiplantae</taxon>
        <taxon>Streptophyta</taxon>
        <taxon>Embryophyta</taxon>
        <taxon>Tracheophyta</taxon>
        <taxon>Spermatophyta</taxon>
        <taxon>Magnoliopsida</taxon>
        <taxon>eudicotyledons</taxon>
        <taxon>Gunneridae</taxon>
        <taxon>Pentapetalae</taxon>
        <taxon>rosids</taxon>
        <taxon>malvids</taxon>
        <taxon>Brassicales</taxon>
        <taxon>Brassicaceae</taxon>
        <taxon>Camelineae</taxon>
        <taxon>Arabidopsis</taxon>
    </lineage>
</organism>
<proteinExistence type="evidence at transcript level"/>
<keyword id="KW-0025">Alternative splicing</keyword>
<keyword id="KW-0175">Coiled coil</keyword>
<keyword id="KW-0445">Lipid transport</keyword>
<keyword id="KW-0446">Lipid-binding</keyword>
<keyword id="KW-1185">Reference proteome</keyword>
<keyword id="KW-0813">Transport</keyword>
<protein>
    <recommendedName>
        <fullName>Oxysterol-binding protein-related protein 1D</fullName>
    </recommendedName>
    <alternativeName>
        <fullName>OSBP-related protein 1D</fullName>
    </alternativeName>
</protein>
<sequence length="816" mass="92332">MNPLCCIAPVSIDDRTNPVVAKSSNHHLGLEAIPVSKHASKPSFSTQASWISQDQLERLSSEVVDDVNLDGKDASSSSNKGCFFFGNCVGAGAGVAGIMYKWVNYGKGWRARWFELEDGVLSYYKIHGPDKIVMNPSREKGVRVIGEESVRYIRKASCGSSNRLGASAVAASRPCKPFGEIHLKVSSIRASKSDDKRLAIFTGTKTLHLRCVSKENRAAWVEAFQVAKDLFPRVASGDILPSEDAVVSTEKLREKLLQEGVGETVVKDCEAIMLSEVSVLQNRLKVLTHKHIILLDTLRQLETEKIELEATVVDETKEHDSCCGQGRRFSDFYSVMSEVSASDSEADNESQDGADVESDEDDVPYFDTNDILSAEAMRSASYRSREAEGNGSIYDKDPFFSDRLQIPARIPQYPYVRRRDNLPEPKEKEKPVGLWSIIKENIGKDLSGVCLPVYFNEPLSSLQKCFEDLEYSYLIDRALEWGKQGNELMRILNIAAFAVSGYASTEGRQCKPFNPLLGETYEADYPDKGLRFFSEKVSHHPMIVACHCEGQGWNFWGDSNIKGKFWGRSIQLDPVGVLTLKFDDGEIYQWSKVTTSIYNIILGKLYCDHYGTMRIKGGSNYSCRLKFKEQSVIDRNPRQVHGFVQDNRTGEKVAILIGKWDEAMYYVLGDPTTKPKGYDPMTEAVLLWERDKSPTKTRYNLSPFAISLNEITPGMIDKLPPTDSRLRPDQRHLENGEYESANAEKLRLEQLQRQARRLQEKGWKPRWFEKDEEGNYRYLGGYWEAREKKDWDRITDIFKKQQQRNSLSSSSSSTFL</sequence>
<accession>Q9SAF0</accession>
<name>ORP1D_ARATH</name>
<reference key="1">
    <citation type="journal article" date="2000" name="Nature">
        <title>Sequence and analysis of chromosome 1 of the plant Arabidopsis thaliana.</title>
        <authorList>
            <person name="Theologis A."/>
            <person name="Ecker J.R."/>
            <person name="Palm C.J."/>
            <person name="Federspiel N.A."/>
            <person name="Kaul S."/>
            <person name="White O."/>
            <person name="Alonso J."/>
            <person name="Altafi H."/>
            <person name="Araujo R."/>
            <person name="Bowman C.L."/>
            <person name="Brooks S.Y."/>
            <person name="Buehler E."/>
            <person name="Chan A."/>
            <person name="Chao Q."/>
            <person name="Chen H."/>
            <person name="Cheuk R.F."/>
            <person name="Chin C.W."/>
            <person name="Chung M.K."/>
            <person name="Conn L."/>
            <person name="Conway A.B."/>
            <person name="Conway A.R."/>
            <person name="Creasy T.H."/>
            <person name="Dewar K."/>
            <person name="Dunn P."/>
            <person name="Etgu P."/>
            <person name="Feldblyum T.V."/>
            <person name="Feng J.-D."/>
            <person name="Fong B."/>
            <person name="Fujii C.Y."/>
            <person name="Gill J.E."/>
            <person name="Goldsmith A.D."/>
            <person name="Haas B."/>
            <person name="Hansen N.F."/>
            <person name="Hughes B."/>
            <person name="Huizar L."/>
            <person name="Hunter J.L."/>
            <person name="Jenkins J."/>
            <person name="Johnson-Hopson C."/>
            <person name="Khan S."/>
            <person name="Khaykin E."/>
            <person name="Kim C.J."/>
            <person name="Koo H.L."/>
            <person name="Kremenetskaia I."/>
            <person name="Kurtz D.B."/>
            <person name="Kwan A."/>
            <person name="Lam B."/>
            <person name="Langin-Hooper S."/>
            <person name="Lee A."/>
            <person name="Lee J.M."/>
            <person name="Lenz C.A."/>
            <person name="Li J.H."/>
            <person name="Li Y.-P."/>
            <person name="Lin X."/>
            <person name="Liu S.X."/>
            <person name="Liu Z.A."/>
            <person name="Luros J.S."/>
            <person name="Maiti R."/>
            <person name="Marziali A."/>
            <person name="Militscher J."/>
            <person name="Miranda M."/>
            <person name="Nguyen M."/>
            <person name="Nierman W.C."/>
            <person name="Osborne B.I."/>
            <person name="Pai G."/>
            <person name="Peterson J."/>
            <person name="Pham P.K."/>
            <person name="Rizzo M."/>
            <person name="Rooney T."/>
            <person name="Rowley D."/>
            <person name="Sakano H."/>
            <person name="Salzberg S.L."/>
            <person name="Schwartz J.R."/>
            <person name="Shinn P."/>
            <person name="Southwick A.M."/>
            <person name="Sun H."/>
            <person name="Tallon L.J."/>
            <person name="Tambunga G."/>
            <person name="Toriumi M.J."/>
            <person name="Town C.D."/>
            <person name="Utterback T."/>
            <person name="Van Aken S."/>
            <person name="Vaysberg M."/>
            <person name="Vysotskaia V.S."/>
            <person name="Walker M."/>
            <person name="Wu D."/>
            <person name="Yu G."/>
            <person name="Fraser C.M."/>
            <person name="Venter J.C."/>
            <person name="Davis R.W."/>
        </authorList>
    </citation>
    <scope>NUCLEOTIDE SEQUENCE [LARGE SCALE GENOMIC DNA]</scope>
    <source>
        <strain>cv. Columbia</strain>
    </source>
</reference>
<reference key="2">
    <citation type="journal article" date="2017" name="Plant J.">
        <title>Araport11: a complete reannotation of the Arabidopsis thaliana reference genome.</title>
        <authorList>
            <person name="Cheng C.Y."/>
            <person name="Krishnakumar V."/>
            <person name="Chan A.P."/>
            <person name="Thibaud-Nissen F."/>
            <person name="Schobel S."/>
            <person name="Town C.D."/>
        </authorList>
    </citation>
    <scope>GENOME REANNOTATION</scope>
    <source>
        <strain>cv. Columbia</strain>
    </source>
</reference>
<reference key="3">
    <citation type="journal article" date="2003" name="Science">
        <title>Empirical analysis of transcriptional activity in the Arabidopsis genome.</title>
        <authorList>
            <person name="Yamada K."/>
            <person name="Lim J."/>
            <person name="Dale J.M."/>
            <person name="Chen H."/>
            <person name="Shinn P."/>
            <person name="Palm C.J."/>
            <person name="Southwick A.M."/>
            <person name="Wu H.C."/>
            <person name="Kim C.J."/>
            <person name="Nguyen M."/>
            <person name="Pham P.K."/>
            <person name="Cheuk R.F."/>
            <person name="Karlin-Newmann G."/>
            <person name="Liu S.X."/>
            <person name="Lam B."/>
            <person name="Sakano H."/>
            <person name="Wu T."/>
            <person name="Yu G."/>
            <person name="Miranda M."/>
            <person name="Quach H.L."/>
            <person name="Tripp M."/>
            <person name="Chang C.H."/>
            <person name="Lee J.M."/>
            <person name="Toriumi M.J."/>
            <person name="Chan M.M."/>
            <person name="Tang C.C."/>
            <person name="Onodera C.S."/>
            <person name="Deng J.M."/>
            <person name="Akiyama K."/>
            <person name="Ansari Y."/>
            <person name="Arakawa T."/>
            <person name="Banh J."/>
            <person name="Banno F."/>
            <person name="Bowser L."/>
            <person name="Brooks S.Y."/>
            <person name="Carninci P."/>
            <person name="Chao Q."/>
            <person name="Choy N."/>
            <person name="Enju A."/>
            <person name="Goldsmith A.D."/>
            <person name="Gurjal M."/>
            <person name="Hansen N.F."/>
            <person name="Hayashizaki Y."/>
            <person name="Johnson-Hopson C."/>
            <person name="Hsuan V.W."/>
            <person name="Iida K."/>
            <person name="Karnes M."/>
            <person name="Khan S."/>
            <person name="Koesema E."/>
            <person name="Ishida J."/>
            <person name="Jiang P.X."/>
            <person name="Jones T."/>
            <person name="Kawai J."/>
            <person name="Kamiya A."/>
            <person name="Meyers C."/>
            <person name="Nakajima M."/>
            <person name="Narusaka M."/>
            <person name="Seki M."/>
            <person name="Sakurai T."/>
            <person name="Satou M."/>
            <person name="Tamse R."/>
            <person name="Vaysberg M."/>
            <person name="Wallender E.K."/>
            <person name="Wong C."/>
            <person name="Yamamura Y."/>
            <person name="Yuan S."/>
            <person name="Shinozaki K."/>
            <person name="Davis R.W."/>
            <person name="Theologis A."/>
            <person name="Ecker J.R."/>
        </authorList>
    </citation>
    <scope>NUCLEOTIDE SEQUENCE [LARGE SCALE MRNA]</scope>
    <source>
        <strain>cv. Columbia</strain>
    </source>
</reference>
<reference key="4">
    <citation type="journal article" date="2006" name="Plant Mol. Biol.">
        <title>Identification and characterization of PiORP1, a Petunia oxysterol-binding-protein related protein involved in receptor-kinase mediated signaling in pollen, and analysis of the ORP gene family in Arabidopsis.</title>
        <authorList>
            <person name="Skirpan A.L."/>
            <person name="Dowd P.E."/>
            <person name="Sijacic P."/>
            <person name="Jaworski C.J."/>
            <person name="Gilroy S."/>
            <person name="Kao T.H."/>
        </authorList>
    </citation>
    <scope>TISSUE SPECIFICITY</scope>
    <scope>GENE FAMILY</scope>
    <scope>NOMENCLATURE</scope>
</reference>